<proteinExistence type="inferred from homology"/>
<feature type="chain" id="PRO_0000088462" description="Putative zinc metalloprotease SAR1238">
    <location>
        <begin position="1"/>
        <end position="428"/>
    </location>
</feature>
<feature type="transmembrane region" description="Helical" evidence="1">
    <location>
        <begin position="172"/>
        <end position="194"/>
    </location>
</feature>
<feature type="transmembrane region" description="Helical" evidence="1">
    <location>
        <begin position="309"/>
        <end position="331"/>
    </location>
</feature>
<feature type="transmembrane region" description="Helical" evidence="1">
    <location>
        <begin position="352"/>
        <end position="374"/>
    </location>
</feature>
<feature type="transmembrane region" description="Helical" evidence="1">
    <location>
        <begin position="401"/>
        <end position="420"/>
    </location>
</feature>
<feature type="domain" description="PDZ">
    <location>
        <begin position="186"/>
        <end position="269"/>
    </location>
</feature>
<feature type="active site" evidence="2">
    <location>
        <position position="22"/>
    </location>
</feature>
<feature type="binding site" evidence="2">
    <location>
        <position position="21"/>
    </location>
    <ligand>
        <name>Zn(2+)</name>
        <dbReference type="ChEBI" id="CHEBI:29105"/>
        <note>catalytic</note>
    </ligand>
</feature>
<feature type="binding site" evidence="2">
    <location>
        <position position="25"/>
    </location>
    <ligand>
        <name>Zn(2+)</name>
        <dbReference type="ChEBI" id="CHEBI:29105"/>
        <note>catalytic</note>
    </ligand>
</feature>
<evidence type="ECO:0000255" key="1"/>
<evidence type="ECO:0000255" key="2">
    <source>
        <dbReference type="PROSITE-ProRule" id="PRU10095"/>
    </source>
</evidence>
<evidence type="ECO:0000305" key="3"/>
<name>Y1238_STAAR</name>
<accession>Q6GHH3</accession>
<keyword id="KW-1003">Cell membrane</keyword>
<keyword id="KW-0378">Hydrolase</keyword>
<keyword id="KW-0472">Membrane</keyword>
<keyword id="KW-0479">Metal-binding</keyword>
<keyword id="KW-0482">Metalloprotease</keyword>
<keyword id="KW-0645">Protease</keyword>
<keyword id="KW-0812">Transmembrane</keyword>
<keyword id="KW-1133">Transmembrane helix</keyword>
<keyword id="KW-0862">Zinc</keyword>
<dbReference type="EC" id="3.4.24.-"/>
<dbReference type="EMBL" id="BX571856">
    <property type="protein sequence ID" value="CAG40240.1"/>
    <property type="molecule type" value="Genomic_DNA"/>
</dbReference>
<dbReference type="SMR" id="Q6GHH3"/>
<dbReference type="KEGG" id="sar:SAR1238"/>
<dbReference type="HOGENOM" id="CLU_025778_1_0_9"/>
<dbReference type="Proteomes" id="UP000000596">
    <property type="component" value="Chromosome"/>
</dbReference>
<dbReference type="GO" id="GO:0005886">
    <property type="term" value="C:plasma membrane"/>
    <property type="evidence" value="ECO:0007669"/>
    <property type="project" value="UniProtKB-SubCell"/>
</dbReference>
<dbReference type="GO" id="GO:0046872">
    <property type="term" value="F:metal ion binding"/>
    <property type="evidence" value="ECO:0007669"/>
    <property type="project" value="UniProtKB-KW"/>
</dbReference>
<dbReference type="GO" id="GO:0004222">
    <property type="term" value="F:metalloendopeptidase activity"/>
    <property type="evidence" value="ECO:0007669"/>
    <property type="project" value="InterPro"/>
</dbReference>
<dbReference type="GO" id="GO:0006508">
    <property type="term" value="P:proteolysis"/>
    <property type="evidence" value="ECO:0007669"/>
    <property type="project" value="UniProtKB-KW"/>
</dbReference>
<dbReference type="CDD" id="cd23081">
    <property type="entry name" value="cpPDZ_EcRseP-like"/>
    <property type="match status" value="1"/>
</dbReference>
<dbReference type="CDD" id="cd06163">
    <property type="entry name" value="S2P-M50_PDZ_RseP-like"/>
    <property type="match status" value="1"/>
</dbReference>
<dbReference type="Gene3D" id="2.30.42.10">
    <property type="match status" value="1"/>
</dbReference>
<dbReference type="InterPro" id="IPR001478">
    <property type="entry name" value="PDZ"/>
</dbReference>
<dbReference type="InterPro" id="IPR036034">
    <property type="entry name" value="PDZ_sf"/>
</dbReference>
<dbReference type="InterPro" id="IPR004387">
    <property type="entry name" value="Pept_M50_Zn"/>
</dbReference>
<dbReference type="InterPro" id="IPR008915">
    <property type="entry name" value="Peptidase_M50"/>
</dbReference>
<dbReference type="NCBIfam" id="TIGR00054">
    <property type="entry name" value="RIP metalloprotease RseP"/>
    <property type="match status" value="1"/>
</dbReference>
<dbReference type="PANTHER" id="PTHR42837:SF2">
    <property type="entry name" value="MEMBRANE METALLOPROTEASE ARASP2, CHLOROPLASTIC-RELATED"/>
    <property type="match status" value="1"/>
</dbReference>
<dbReference type="PANTHER" id="PTHR42837">
    <property type="entry name" value="REGULATOR OF SIGMA-E PROTEASE RSEP"/>
    <property type="match status" value="1"/>
</dbReference>
<dbReference type="Pfam" id="PF13180">
    <property type="entry name" value="PDZ_2"/>
    <property type="match status" value="1"/>
</dbReference>
<dbReference type="Pfam" id="PF02163">
    <property type="entry name" value="Peptidase_M50"/>
    <property type="match status" value="1"/>
</dbReference>
<dbReference type="SUPFAM" id="SSF50156">
    <property type="entry name" value="PDZ domain-like"/>
    <property type="match status" value="1"/>
</dbReference>
<dbReference type="PROSITE" id="PS00142">
    <property type="entry name" value="ZINC_PROTEASE"/>
    <property type="match status" value="1"/>
</dbReference>
<reference key="1">
    <citation type="journal article" date="2004" name="Proc. Natl. Acad. Sci. U.S.A.">
        <title>Complete genomes of two clinical Staphylococcus aureus strains: evidence for the rapid evolution of virulence and drug resistance.</title>
        <authorList>
            <person name="Holden M.T.G."/>
            <person name="Feil E.J."/>
            <person name="Lindsay J.A."/>
            <person name="Peacock S.J."/>
            <person name="Day N.P.J."/>
            <person name="Enright M.C."/>
            <person name="Foster T.J."/>
            <person name="Moore C.E."/>
            <person name="Hurst L."/>
            <person name="Atkin R."/>
            <person name="Barron A."/>
            <person name="Bason N."/>
            <person name="Bentley S.D."/>
            <person name="Chillingworth C."/>
            <person name="Chillingworth T."/>
            <person name="Churcher C."/>
            <person name="Clark L."/>
            <person name="Corton C."/>
            <person name="Cronin A."/>
            <person name="Doggett J."/>
            <person name="Dowd L."/>
            <person name="Feltwell T."/>
            <person name="Hance Z."/>
            <person name="Harris B."/>
            <person name="Hauser H."/>
            <person name="Holroyd S."/>
            <person name="Jagels K."/>
            <person name="James K.D."/>
            <person name="Lennard N."/>
            <person name="Line A."/>
            <person name="Mayes R."/>
            <person name="Moule S."/>
            <person name="Mungall K."/>
            <person name="Ormond D."/>
            <person name="Quail M.A."/>
            <person name="Rabbinowitsch E."/>
            <person name="Rutherford K.M."/>
            <person name="Sanders M."/>
            <person name="Sharp S."/>
            <person name="Simmonds M."/>
            <person name="Stevens K."/>
            <person name="Whitehead S."/>
            <person name="Barrell B.G."/>
            <person name="Spratt B.G."/>
            <person name="Parkhill J."/>
        </authorList>
    </citation>
    <scope>NUCLEOTIDE SEQUENCE [LARGE SCALE GENOMIC DNA]</scope>
    <source>
        <strain>MRSA252</strain>
    </source>
</reference>
<comment type="cofactor">
    <cofactor evidence="3">
        <name>Zn(2+)</name>
        <dbReference type="ChEBI" id="CHEBI:29105"/>
    </cofactor>
</comment>
<comment type="subcellular location">
    <subcellularLocation>
        <location evidence="3">Cell membrane</location>
        <topology evidence="3">Multi-pass membrane protein</topology>
    </subcellularLocation>
</comment>
<comment type="similarity">
    <text evidence="3">Belongs to the peptidase M50B family.</text>
</comment>
<sequence length="428" mass="48137">MSYLVTIIAFIIVFGVLVTVHEYGHMFFAKRAGIMCPEFAIGMGPKIFSFRKNETLYTIRLLPVGGYVRMAGDGLEEPPVEPGMNVKIKLNEENEITHIILDDHHKFQQIEAIEVKKCDFKDDLFIEGITAYDNERHHFKIARKSFFVENGSLVQIAPRDRQFAHKKPWPKFLTLFAGPLFNFILALVLFIGLAYYQGTPTSTVEQVADKYPAQQAGIQKGDKIVQIGKYKISEFDDVDKALDKVKDNKTTVKFERDGKTKSVELTPKKTERKLTKVSSETKYVLGFQPASEHTLFKPIVYGFKSFLIGSTYIFSAVVGMLASIFTGGFSFDMLNGPVGIYHNVDSVVKAGIISLIGYTALLSVNLGIMNLIPIPALDGGRILFVIYEAIFRKPVNKKAETTIIAIGAIFMVVIMILVTWNDIRRYFL</sequence>
<protein>
    <recommendedName>
        <fullName>Putative zinc metalloprotease SAR1238</fullName>
        <ecNumber>3.4.24.-</ecNumber>
    </recommendedName>
</protein>
<organism>
    <name type="scientific">Staphylococcus aureus (strain MRSA252)</name>
    <dbReference type="NCBI Taxonomy" id="282458"/>
    <lineage>
        <taxon>Bacteria</taxon>
        <taxon>Bacillati</taxon>
        <taxon>Bacillota</taxon>
        <taxon>Bacilli</taxon>
        <taxon>Bacillales</taxon>
        <taxon>Staphylococcaceae</taxon>
        <taxon>Staphylococcus</taxon>
    </lineage>
</organism>
<gene>
    <name type="ordered locus">SAR1238</name>
</gene>